<protein>
    <recommendedName>
        <fullName evidence="1">Volume-regulated anion channel subunit LRRC8B</fullName>
    </recommendedName>
    <alternativeName>
        <fullName evidence="10">Leucine-rich repeat-containing protein 8B</fullName>
    </alternativeName>
    <alternativeName>
        <fullName evidence="12">T-cell activation leucine repeat-rich protein</fullName>
        <shortName evidence="12">TA-LRRP</shortName>
    </alternativeName>
</protein>
<accession>Q6P9F7</accession>
<accession>D3DT28</accession>
<accession>Q6UY21</accession>
<accession>Q8N106</accession>
<accession>Q92627</accession>
<keyword id="KW-1003">Cell membrane</keyword>
<keyword id="KW-1015">Disulfide bond</keyword>
<keyword id="KW-0256">Endoplasmic reticulum</keyword>
<keyword id="KW-0325">Glycoprotein</keyword>
<keyword id="KW-0407">Ion channel</keyword>
<keyword id="KW-0406">Ion transport</keyword>
<keyword id="KW-0433">Leucine-rich repeat</keyword>
<keyword id="KW-0472">Membrane</keyword>
<keyword id="KW-0597">Phosphoprotein</keyword>
<keyword id="KW-1267">Proteomics identification</keyword>
<keyword id="KW-1185">Reference proteome</keyword>
<keyword id="KW-0677">Repeat</keyword>
<keyword id="KW-0812">Transmembrane</keyword>
<keyword id="KW-1133">Transmembrane helix</keyword>
<keyword id="KW-0813">Transport</keyword>
<name>LRC8B_HUMAN</name>
<reference key="1">
    <citation type="submission" date="2001-05" db="EMBL/GenBank/DDBJ databases">
        <title>T lymphocyte activation gene discovery using ink-jet microarrays.</title>
        <authorList>
            <person name="Mao M."/>
            <person name="Biery M.C."/>
            <person name="Kobayashi S.V."/>
            <person name="Schimmack G.A."/>
            <person name="Ward T.R."/>
            <person name="Schelter J.M."/>
            <person name="Burchard J."/>
            <person name="He Y.D."/>
            <person name="Dai H."/>
            <person name="Leonardson A."/>
            <person name="Coffey E."/>
            <person name="Stoughton R."/>
            <person name="Linsley P.S."/>
        </authorList>
    </citation>
    <scope>NUCLEOTIDE SEQUENCE [MRNA]</scope>
</reference>
<reference key="2">
    <citation type="journal article" date="1996" name="DNA Res.">
        <title>Prediction of the coding sequences of unidentified human genes. VI. The coding sequences of 80 new genes (KIAA0201-KIAA0280) deduced by analysis of cDNA clones from cell line KG-1 and brain.</title>
        <authorList>
            <person name="Nagase T."/>
            <person name="Seki N."/>
            <person name="Ishikawa K."/>
            <person name="Ohira M."/>
            <person name="Kawarabayasi Y."/>
            <person name="Ohara O."/>
            <person name="Tanaka A."/>
            <person name="Kotani H."/>
            <person name="Miyajima N."/>
            <person name="Nomura N."/>
        </authorList>
    </citation>
    <scope>NUCLEOTIDE SEQUENCE [LARGE SCALE MRNA]</scope>
    <source>
        <tissue>Brain</tissue>
    </source>
</reference>
<reference key="3">
    <citation type="journal article" date="2003" name="Genome Res.">
        <title>The secreted protein discovery initiative (SPDI), a large-scale effort to identify novel human secreted and transmembrane proteins: a bioinformatics assessment.</title>
        <authorList>
            <person name="Clark H.F."/>
            <person name="Gurney A.L."/>
            <person name="Abaya E."/>
            <person name="Baker K."/>
            <person name="Baldwin D.T."/>
            <person name="Brush J."/>
            <person name="Chen J."/>
            <person name="Chow B."/>
            <person name="Chui C."/>
            <person name="Crowley C."/>
            <person name="Currell B."/>
            <person name="Deuel B."/>
            <person name="Dowd P."/>
            <person name="Eaton D."/>
            <person name="Foster J.S."/>
            <person name="Grimaldi C."/>
            <person name="Gu Q."/>
            <person name="Hass P.E."/>
            <person name="Heldens S."/>
            <person name="Huang A."/>
            <person name="Kim H.S."/>
            <person name="Klimowski L."/>
            <person name="Jin Y."/>
            <person name="Johnson S."/>
            <person name="Lee J."/>
            <person name="Lewis L."/>
            <person name="Liao D."/>
            <person name="Mark M.R."/>
            <person name="Robbie E."/>
            <person name="Sanchez C."/>
            <person name="Schoenfeld J."/>
            <person name="Seshagiri S."/>
            <person name="Simmons L."/>
            <person name="Singh J."/>
            <person name="Smith V."/>
            <person name="Stinson J."/>
            <person name="Vagts A."/>
            <person name="Vandlen R.L."/>
            <person name="Watanabe C."/>
            <person name="Wieand D."/>
            <person name="Woods K."/>
            <person name="Xie M.-H."/>
            <person name="Yansura D.G."/>
            <person name="Yi S."/>
            <person name="Yu G."/>
            <person name="Yuan J."/>
            <person name="Zhang M."/>
            <person name="Zhang Z."/>
            <person name="Goddard A.D."/>
            <person name="Wood W.I."/>
            <person name="Godowski P.J."/>
            <person name="Gray A.M."/>
        </authorList>
    </citation>
    <scope>NUCLEOTIDE SEQUENCE [LARGE SCALE MRNA]</scope>
</reference>
<reference key="4">
    <citation type="submission" date="2005-09" db="EMBL/GenBank/DDBJ databases">
        <authorList>
            <person name="Mural R.J."/>
            <person name="Istrail S."/>
            <person name="Sutton G.G."/>
            <person name="Florea L."/>
            <person name="Halpern A.L."/>
            <person name="Mobarry C.M."/>
            <person name="Lippert R."/>
            <person name="Walenz B."/>
            <person name="Shatkay H."/>
            <person name="Dew I."/>
            <person name="Miller J.R."/>
            <person name="Flanigan M.J."/>
            <person name="Edwards N.J."/>
            <person name="Bolanos R."/>
            <person name="Fasulo D."/>
            <person name="Halldorsson B.V."/>
            <person name="Hannenhalli S."/>
            <person name="Turner R."/>
            <person name="Yooseph S."/>
            <person name="Lu F."/>
            <person name="Nusskern D.R."/>
            <person name="Shue B.C."/>
            <person name="Zheng X.H."/>
            <person name="Zhong F."/>
            <person name="Delcher A.L."/>
            <person name="Huson D.H."/>
            <person name="Kravitz S.A."/>
            <person name="Mouchard L."/>
            <person name="Reinert K."/>
            <person name="Remington K.A."/>
            <person name="Clark A.G."/>
            <person name="Waterman M.S."/>
            <person name="Eichler E.E."/>
            <person name="Adams M.D."/>
            <person name="Hunkapiller M.W."/>
            <person name="Myers E.W."/>
            <person name="Venter J.C."/>
        </authorList>
    </citation>
    <scope>NUCLEOTIDE SEQUENCE [LARGE SCALE GENOMIC DNA]</scope>
</reference>
<reference key="5">
    <citation type="journal article" date="2004" name="Genome Res.">
        <title>The status, quality, and expansion of the NIH full-length cDNA project: the Mammalian Gene Collection (MGC).</title>
        <authorList>
            <consortium name="The MGC Project Team"/>
        </authorList>
    </citation>
    <scope>NUCLEOTIDE SEQUENCE [LARGE SCALE MRNA]</scope>
    <scope>VARIANT LYS-419</scope>
    <source>
        <tissue>Testis</tissue>
    </source>
</reference>
<reference key="6">
    <citation type="journal article" date="2012" name="Bioessays">
        <title>LRRC8 proteins share a common ancestor with pannexins, and may form hexameric channels involved in cell-cell communication.</title>
        <authorList>
            <person name="Abascal F."/>
            <person name="Zardoya R."/>
        </authorList>
    </citation>
    <scope>IDENTIFICATION</scope>
</reference>
<reference key="7">
    <citation type="journal article" date="2014" name="Science">
        <title>Identification of LRRC8 heteromers as an essential component of the volume-regulated anion channel VRAC.</title>
        <authorList>
            <person name="Voss F.K."/>
            <person name="Ullrich F."/>
            <person name="Muench J."/>
            <person name="Lazarow K."/>
            <person name="Lutter D."/>
            <person name="Mah N."/>
            <person name="Andrade-Navarro M.A."/>
            <person name="von Kries J.P."/>
            <person name="Stauber T."/>
            <person name="Jentsch T.J."/>
        </authorList>
    </citation>
    <scope>FUNCTION</scope>
    <scope>TRANSPORTER ACTIVITY</scope>
    <scope>INTERACTION WITH LRRC8A</scope>
    <scope>SUBCELLULAR LOCATION</scope>
</reference>
<reference key="8">
    <citation type="journal article" date="2016" name="Cell">
        <title>LRRC8 proteins form volume-regulated anion channels that sense ionic strength.</title>
        <authorList>
            <person name="Syeda R."/>
            <person name="Qiu Z."/>
            <person name="Dubin A.E."/>
            <person name="Murthy S.E."/>
            <person name="Florendo M.N."/>
            <person name="Mason D.E."/>
            <person name="Mathur J."/>
            <person name="Cahalan S.M."/>
            <person name="Peters E.C."/>
            <person name="Montal M."/>
            <person name="Patapoutian A."/>
        </authorList>
    </citation>
    <scope>FUNCTION</scope>
    <scope>SUBCELLULAR LOCATION</scope>
    <scope>SUBUNIT</scope>
    <scope>IDENTIFICATION BY MASS SPECTROMETRY</scope>
</reference>
<reference key="9">
    <citation type="journal article" date="2017" name="J. Cell Sci.">
        <title>Selective transport of neurotransmitters and modulators by distinct volume-regulated LRRC8 anion channels.</title>
        <authorList>
            <person name="Lutter D."/>
            <person name="Ullrich F."/>
            <person name="Lueck J.C."/>
            <person name="Kempa S."/>
            <person name="Jentsch T.J."/>
        </authorList>
    </citation>
    <scope>FUNCTION</scope>
    <scope>SUBCELLULAR LOCATION</scope>
    <scope>SUBUNIT</scope>
</reference>
<comment type="function">
    <text evidence="6 7 8">Non-essential component of the volume-regulated anion channel (VRAC, also named VSOAC channel), an anion channel required to maintain a constant cell volume in response to extracellular or intracellular osmotic changes (PubMed:24790029, PubMed:26824658, PubMed:28193731). The VRAC channel conducts iodide better than chloride and can also conduct organic osmolytes like taurine. Channel activity requires LRRC8A plus at least one other family member (LRRC8B, LRRC8C, LRRC8D or LRRC8E); channel characteristics depend on the precise subunit composition (PubMed:24790029, PubMed:26824658, PubMed:28193731).</text>
</comment>
<comment type="catalytic activity">
    <reaction evidence="14">
        <text>chloride(in) = chloride(out)</text>
        <dbReference type="Rhea" id="RHEA:29823"/>
        <dbReference type="ChEBI" id="CHEBI:17996"/>
    </reaction>
</comment>
<comment type="catalytic activity">
    <reaction evidence="14">
        <text>iodide(out) = iodide(in)</text>
        <dbReference type="Rhea" id="RHEA:66324"/>
        <dbReference type="ChEBI" id="CHEBI:16382"/>
    </reaction>
</comment>
<comment type="catalytic activity">
    <reaction evidence="14">
        <text>taurine(out) = taurine(in)</text>
        <dbReference type="Rhea" id="RHEA:66328"/>
        <dbReference type="ChEBI" id="CHEBI:507393"/>
    </reaction>
</comment>
<comment type="subunit">
    <text evidence="1 6 7 8 13">Heterohexamer; oligomerizes with other LRRC8 proteins (LRRC8A, LRRC8C, LRRC8D and/or LRRC8E) to form a heterohexamer (PubMed:24790029, PubMed:26824658, PubMed:28193731). In vivo, the subunit composition may depend primarily on expression levels, and heterooligomeric channels containing various proportions of the different LRRC8 proteins may coexist (By similarity).</text>
</comment>
<comment type="interaction">
    <interactant intactId="EBI-9477617">
        <id>Q6P9F7</id>
    </interactant>
    <interactant intactId="EBI-10970086">
        <id>Q8IWT6</id>
        <label>LRRC8A</label>
    </interactant>
    <organismsDiffer>false</organismsDiffer>
    <experiments>4</experiments>
</comment>
<comment type="subcellular location">
    <subcellularLocation>
        <location evidence="6 7 8">Cell membrane</location>
        <topology evidence="13">Multi-pass membrane protein</topology>
    </subcellularLocation>
    <subcellularLocation>
        <location evidence="14">Endoplasmic reticulum membrane</location>
    </subcellularLocation>
    <text evidence="6">In the absence of LRRC8A, resides primarily in a cytoplasmic compartment, probably the endoplasmic reticulum. Requires LRRC8A for expression at the cell membrane.</text>
</comment>
<comment type="domain">
    <text evidence="3">The volume-regulated anion channel (VRAC) channel forms a trimer of dimers, with symmetry mismatch between the pore-forming domain and the cytosolic LRR repeats, a topology similar to gap junction proteins.</text>
</comment>
<comment type="similarity">
    <text evidence="13">Belongs to the LRRC8 family.</text>
</comment>
<comment type="sequence caution" evidence="13">
    <conflict type="erroneous initiation">
        <sequence resource="EMBL-CDS" id="BAA13220"/>
    </conflict>
</comment>
<organism>
    <name type="scientific">Homo sapiens</name>
    <name type="common">Human</name>
    <dbReference type="NCBI Taxonomy" id="9606"/>
    <lineage>
        <taxon>Eukaryota</taxon>
        <taxon>Metazoa</taxon>
        <taxon>Chordata</taxon>
        <taxon>Craniata</taxon>
        <taxon>Vertebrata</taxon>
        <taxon>Euteleostomi</taxon>
        <taxon>Mammalia</taxon>
        <taxon>Eutheria</taxon>
        <taxon>Euarchontoglires</taxon>
        <taxon>Primates</taxon>
        <taxon>Haplorrhini</taxon>
        <taxon>Catarrhini</taxon>
        <taxon>Hominidae</taxon>
        <taxon>Homo</taxon>
    </lineage>
</organism>
<sequence length="803" mass="92390">MITLTELKCLADAQSSYHILKPWWDVFWYYITLIMLLVAVLAGALQLTQSRVLCCLPCKVEFDNHCAVPWDILKASMNTSSNPGTPLPLPLRIQNDLHRQQYSYIDAVCYEKQLHWFAKFFPYLVLLHTLIFAACSNFWLHYPSTSSRLEHFVAILHKCFDSPWTTRALSETVAEQSVRPLKLSKSKILLSSSGCSADIDSGKQSLPYPQPGLESAGIESPTSSVLDKKEGEQAKAIFEKVKRFRMHVEQKDIIYRVYLKQIIVKVILFVLIITYVPYFLTHITLEIDCSVDVQAFTGYKRYQCVYSLAEIFKVLASFYVILVILYGLTSSYSLWWMLRSSLKQYSFEALREKSNYSDIPDVKNDFAFILHLADQYDPLYSKRFSIFLSEVSENKLKQINLNNEWTVEKLKSKLVKNAQDKIELHLFMLNGLPDNVFELTEMEVLSLELIPEVKLPSAVSQLVNLKELRVYHSSLVVDHPALAFLEENLKILRLKFTEMGKIPRWVFHLKNLKELYLSGCVLPEQLSTMQLEGFQDLKNLRTLYLKSSLSRIPQVVTDLLPSLQKLSLDNEGSKLVVLNNLKKMVNLKSLELISCDLERIPHSIFSLNNLHELDLRENNLKTVEEIISFQHLQNLSCLKLWHNNIAYIPAQIGALSNLEQLSLDHNNIENLPLQLFLCTKLHYLDLSYNHLTFIPEEIQYLSNLQYFAVTNNNIEMLPDGLFQCKKLQCLLLGKNSLMNLSPHVGELSNLTHLELIGNYLETLPPELEGCQSLKRNCLIVEENLLNTLPLPVTERLQTCLDKC</sequence>
<evidence type="ECO:0000250" key="1">
    <source>
        <dbReference type="UniProtKB" id="Q5DU41"/>
    </source>
</evidence>
<evidence type="ECO:0000250" key="2">
    <source>
        <dbReference type="UniProtKB" id="Q80WG5"/>
    </source>
</evidence>
<evidence type="ECO:0000250" key="3">
    <source>
        <dbReference type="UniProtKB" id="Q8IWT6"/>
    </source>
</evidence>
<evidence type="ECO:0000255" key="4"/>
<evidence type="ECO:0000269" key="5">
    <source>
    </source>
</evidence>
<evidence type="ECO:0000269" key="6">
    <source>
    </source>
</evidence>
<evidence type="ECO:0000269" key="7">
    <source>
    </source>
</evidence>
<evidence type="ECO:0000269" key="8">
    <source>
    </source>
</evidence>
<evidence type="ECO:0000303" key="9">
    <source>
    </source>
</evidence>
<evidence type="ECO:0000303" key="10">
    <source>
    </source>
</evidence>
<evidence type="ECO:0000303" key="11">
    <source>
    </source>
</evidence>
<evidence type="ECO:0000303" key="12">
    <source ref="1"/>
</evidence>
<evidence type="ECO:0000305" key="13"/>
<evidence type="ECO:0000305" key="14">
    <source>
    </source>
</evidence>
<evidence type="ECO:0000312" key="15">
    <source>
        <dbReference type="HGNC" id="HGNC:30692"/>
    </source>
</evidence>
<proteinExistence type="evidence at protein level"/>
<gene>
    <name evidence="10 15" type="primary">LRRC8B</name>
    <name evidence="11" type="synonym">KIAA0231</name>
    <name evidence="9" type="ORF">UNQ6413/PRO21207</name>
</gene>
<feature type="chain" id="PRO_0000076245" description="Volume-regulated anion channel subunit LRRC8B">
    <location>
        <begin position="1"/>
        <end position="803"/>
    </location>
</feature>
<feature type="topological domain" description="Cytoplasmic" evidence="13">
    <location>
        <begin position="1"/>
        <end position="25"/>
    </location>
</feature>
<feature type="transmembrane region" description="Helical; Name=1" evidence="4">
    <location>
        <begin position="26"/>
        <end position="46"/>
    </location>
</feature>
<feature type="topological domain" description="Extracellular" evidence="13">
    <location>
        <begin position="47"/>
        <end position="119"/>
    </location>
</feature>
<feature type="transmembrane region" description="Helical; Name=2" evidence="4">
    <location>
        <begin position="120"/>
        <end position="140"/>
    </location>
</feature>
<feature type="topological domain" description="Cytoplasmic" evidence="13">
    <location>
        <begin position="141"/>
        <end position="261"/>
    </location>
</feature>
<feature type="transmembrane region" description="Helical; Name=3" evidence="4">
    <location>
        <begin position="262"/>
        <end position="282"/>
    </location>
</feature>
<feature type="topological domain" description="Extracellular" evidence="13">
    <location>
        <begin position="283"/>
        <end position="307"/>
    </location>
</feature>
<feature type="transmembrane region" description="Helical; Name=4" evidence="4">
    <location>
        <begin position="308"/>
        <end position="328"/>
    </location>
</feature>
<feature type="topological domain" description="Cytoplasmic" evidence="13">
    <location>
        <begin position="329"/>
        <end position="803"/>
    </location>
</feature>
<feature type="repeat" description="LRR 1">
    <location>
        <begin position="464"/>
        <end position="486"/>
    </location>
</feature>
<feature type="repeat" description="LRR 2">
    <location>
        <begin position="488"/>
        <end position="509"/>
    </location>
</feature>
<feature type="repeat" description="LRR 3">
    <location>
        <begin position="511"/>
        <end position="532"/>
    </location>
</feature>
<feature type="repeat" description="LRR 4">
    <location>
        <begin position="539"/>
        <end position="559"/>
    </location>
</feature>
<feature type="repeat" description="LRR 5">
    <location>
        <begin position="562"/>
        <end position="582"/>
    </location>
</feature>
<feature type="repeat" description="LRR 6">
    <location>
        <begin position="586"/>
        <end position="607"/>
    </location>
</feature>
<feature type="repeat" description="LRR 7">
    <location>
        <begin position="609"/>
        <end position="630"/>
    </location>
</feature>
<feature type="repeat" description="LRR 8">
    <location>
        <begin position="634"/>
        <end position="655"/>
    </location>
</feature>
<feature type="repeat" description="LRR 9">
    <location>
        <begin position="657"/>
        <end position="678"/>
    </location>
</feature>
<feature type="repeat" description="LRR 10">
    <location>
        <begin position="680"/>
        <end position="701"/>
    </location>
</feature>
<feature type="repeat" description="LRR 11">
    <location>
        <begin position="703"/>
        <end position="724"/>
    </location>
</feature>
<feature type="repeat" description="LRR 12">
    <location>
        <begin position="726"/>
        <end position="747"/>
    </location>
</feature>
<feature type="repeat" description="LRR 13">
    <location>
        <begin position="749"/>
        <end position="771"/>
    </location>
</feature>
<feature type="modified residue" description="Phosphoserine" evidence="1">
    <location>
        <position position="186"/>
    </location>
</feature>
<feature type="modified residue" description="Phosphoserine" evidence="1">
    <location>
        <position position="196"/>
    </location>
</feature>
<feature type="glycosylation site" description="N-linked (GlcNAc...) asparagine" evidence="4">
    <location>
        <position position="78"/>
    </location>
</feature>
<feature type="disulfide bond" evidence="2">
    <location>
        <begin position="55"/>
        <end position="304"/>
    </location>
</feature>
<feature type="disulfide bond" evidence="2">
    <location>
        <begin position="109"/>
        <end position="289"/>
    </location>
</feature>
<feature type="sequence variant" id="VAR_051126" description="In dbSNP:rs17131746.">
    <original>D</original>
    <variation>N</variation>
    <location>
        <position position="288"/>
    </location>
</feature>
<feature type="sequence variant" id="VAR_025275" description="In dbSNP:rs17855025." evidence="5">
    <original>Q</original>
    <variation>K</variation>
    <location>
        <position position="419"/>
    </location>
</feature>
<feature type="sequence variant" id="VAR_051127" description="In dbSNP:rs3795832.">
    <original>R</original>
    <variation>H</variation>
    <location>
        <position position="469"/>
    </location>
</feature>
<feature type="sequence variant" id="VAR_051128" description="In dbSNP:rs12747447.">
    <original>N</original>
    <variation>S</variation>
    <location>
        <position position="689"/>
    </location>
</feature>
<feature type="sequence conflict" description="In Ref. 3; AAQ88479." evidence="13" ref="3">
    <original>V</original>
    <variation>G</variation>
    <location>
        <position position="225"/>
    </location>
</feature>
<feature type="sequence conflict" description="In Ref. 3; AAQ88479." evidence="13" ref="3">
    <location>
        <position position="626"/>
    </location>
</feature>
<dbReference type="EMBL" id="AF385436">
    <property type="protein sequence ID" value="AAM43837.1"/>
    <property type="molecule type" value="mRNA"/>
</dbReference>
<dbReference type="EMBL" id="D86984">
    <property type="protein sequence ID" value="BAA13220.2"/>
    <property type="status" value="ALT_INIT"/>
    <property type="molecule type" value="mRNA"/>
</dbReference>
<dbReference type="EMBL" id="AY358112">
    <property type="protein sequence ID" value="AAQ88479.1"/>
    <property type="molecule type" value="mRNA"/>
</dbReference>
<dbReference type="EMBL" id="CH471097">
    <property type="protein sequence ID" value="EAW73137.1"/>
    <property type="molecule type" value="Genomic_DNA"/>
</dbReference>
<dbReference type="EMBL" id="CH471097">
    <property type="protein sequence ID" value="EAW73138.1"/>
    <property type="molecule type" value="Genomic_DNA"/>
</dbReference>
<dbReference type="EMBL" id="BC030607">
    <property type="protein sequence ID" value="AAH30607.1"/>
    <property type="molecule type" value="mRNA"/>
</dbReference>
<dbReference type="EMBL" id="BC060782">
    <property type="protein sequence ID" value="AAH60782.1"/>
    <property type="molecule type" value="mRNA"/>
</dbReference>
<dbReference type="CCDS" id="CCDS724.1"/>
<dbReference type="RefSeq" id="NP_001127948.1">
    <property type="nucleotide sequence ID" value="NM_001134476.2"/>
</dbReference>
<dbReference type="RefSeq" id="NP_001356746.1">
    <property type="nucleotide sequence ID" value="NM_001369817.2"/>
</dbReference>
<dbReference type="RefSeq" id="NP_001356748.1">
    <property type="nucleotide sequence ID" value="NM_001369819.2"/>
</dbReference>
<dbReference type="RefSeq" id="NP_056165.1">
    <property type="nucleotide sequence ID" value="NM_015350.4"/>
</dbReference>
<dbReference type="RefSeq" id="XP_005270758.1">
    <property type="nucleotide sequence ID" value="XM_005270701.4"/>
</dbReference>
<dbReference type="RefSeq" id="XP_005270759.1">
    <property type="nucleotide sequence ID" value="XM_005270702.4"/>
</dbReference>
<dbReference type="RefSeq" id="XP_005270760.1">
    <property type="nucleotide sequence ID" value="XM_005270703.4"/>
</dbReference>
<dbReference type="RefSeq" id="XP_011539445.1">
    <property type="nucleotide sequence ID" value="XM_011541143.2"/>
</dbReference>
<dbReference type="RefSeq" id="XP_011539446.1">
    <property type="nucleotide sequence ID" value="XM_011541144.2"/>
</dbReference>
<dbReference type="RefSeq" id="XP_011539447.1">
    <property type="nucleotide sequence ID" value="XM_011541145.2"/>
</dbReference>
<dbReference type="RefSeq" id="XP_011539448.1">
    <property type="nucleotide sequence ID" value="XM_011541146.2"/>
</dbReference>
<dbReference type="RefSeq" id="XP_016856372.1">
    <property type="nucleotide sequence ID" value="XM_017000883.1"/>
</dbReference>
<dbReference type="RefSeq" id="XP_016856373.1">
    <property type="nucleotide sequence ID" value="XM_017000884.1"/>
</dbReference>
<dbReference type="RefSeq" id="XP_016856374.1">
    <property type="nucleotide sequence ID" value="XM_017000885.1"/>
</dbReference>
<dbReference type="SMR" id="Q6P9F7"/>
<dbReference type="BioGRID" id="117054">
    <property type="interactions" value="35"/>
</dbReference>
<dbReference type="CORUM" id="Q6P9F7"/>
<dbReference type="DIP" id="DIP-61361N"/>
<dbReference type="FunCoup" id="Q6P9F7">
    <property type="interactions" value="124"/>
</dbReference>
<dbReference type="IntAct" id="Q6P9F7">
    <property type="interactions" value="24"/>
</dbReference>
<dbReference type="STRING" id="9606.ENSP00000491377"/>
<dbReference type="TCDB" id="1.A.25.3.1">
    <property type="family name" value="the gap junction-forming innexin (innexin) family"/>
</dbReference>
<dbReference type="GlyCosmos" id="Q6P9F7">
    <property type="glycosylation" value="1 site, No reported glycans"/>
</dbReference>
<dbReference type="GlyGen" id="Q6P9F7">
    <property type="glycosylation" value="2 sites"/>
</dbReference>
<dbReference type="iPTMnet" id="Q6P9F7"/>
<dbReference type="PhosphoSitePlus" id="Q6P9F7"/>
<dbReference type="BioMuta" id="LRRC8B"/>
<dbReference type="DMDM" id="88911355"/>
<dbReference type="jPOST" id="Q6P9F7"/>
<dbReference type="MassIVE" id="Q6P9F7"/>
<dbReference type="PaxDb" id="9606-ENSP00000332674"/>
<dbReference type="PeptideAtlas" id="Q6P9F7"/>
<dbReference type="ProteomicsDB" id="67042"/>
<dbReference type="Antibodypedia" id="19852">
    <property type="antibodies" value="117 antibodies from 14 providers"/>
</dbReference>
<dbReference type="DNASU" id="23507"/>
<dbReference type="Ensembl" id="ENST00000330947.7">
    <property type="protein sequence ID" value="ENSP00000332674.2"/>
    <property type="gene ID" value="ENSG00000197147.15"/>
</dbReference>
<dbReference type="Ensembl" id="ENST00000639264.1">
    <property type="protein sequence ID" value="ENSP00000492151.1"/>
    <property type="gene ID" value="ENSG00000197147.15"/>
</dbReference>
<dbReference type="Ensembl" id="ENST00000640258.1">
    <property type="protein sequence ID" value="ENSP00000491377.1"/>
    <property type="gene ID" value="ENSG00000197147.15"/>
</dbReference>
<dbReference type="GeneID" id="23507"/>
<dbReference type="KEGG" id="hsa:23507"/>
<dbReference type="MANE-Select" id="ENST00000330947.7">
    <property type="protein sequence ID" value="ENSP00000332674.2"/>
    <property type="RefSeq nucleotide sequence ID" value="NM_001369817.2"/>
    <property type="RefSeq protein sequence ID" value="NP_001356746.1"/>
</dbReference>
<dbReference type="UCSC" id="uc057ieo.1">
    <property type="organism name" value="human"/>
</dbReference>
<dbReference type="AGR" id="HGNC:30692"/>
<dbReference type="CTD" id="23507"/>
<dbReference type="DisGeNET" id="23507"/>
<dbReference type="GeneCards" id="LRRC8B"/>
<dbReference type="HGNC" id="HGNC:30692">
    <property type="gene designation" value="LRRC8B"/>
</dbReference>
<dbReference type="HPA" id="ENSG00000197147">
    <property type="expression patterns" value="Tissue enhanced (brain)"/>
</dbReference>
<dbReference type="MIM" id="612888">
    <property type="type" value="gene"/>
</dbReference>
<dbReference type="neXtProt" id="NX_Q6P9F7"/>
<dbReference type="OpenTargets" id="ENSG00000197147"/>
<dbReference type="PharmGKB" id="PA142671535"/>
<dbReference type="VEuPathDB" id="HostDB:ENSG00000197147"/>
<dbReference type="eggNOG" id="KOG0619">
    <property type="taxonomic scope" value="Eukaryota"/>
</dbReference>
<dbReference type="GeneTree" id="ENSGT00940000160703"/>
<dbReference type="HOGENOM" id="CLU_019019_0_0_1"/>
<dbReference type="InParanoid" id="Q6P9F7"/>
<dbReference type="OMA" id="WYYLTLI"/>
<dbReference type="OrthoDB" id="1394818at2759"/>
<dbReference type="PAN-GO" id="Q6P9F7">
    <property type="GO annotations" value="0 GO annotations based on evolutionary models"/>
</dbReference>
<dbReference type="PhylomeDB" id="Q6P9F7"/>
<dbReference type="TreeFam" id="TF331443"/>
<dbReference type="PathwayCommons" id="Q6P9F7"/>
<dbReference type="Reactome" id="R-HSA-5223345">
    <property type="pathway name" value="Miscellaneous transport and binding events"/>
</dbReference>
<dbReference type="SignaLink" id="Q6P9F7"/>
<dbReference type="BioGRID-ORCS" id="23507">
    <property type="hits" value="9 hits in 1153 CRISPR screens"/>
</dbReference>
<dbReference type="ChiTaRS" id="LRRC8B">
    <property type="organism name" value="human"/>
</dbReference>
<dbReference type="GenomeRNAi" id="23507"/>
<dbReference type="Pharos" id="Q6P9F7">
    <property type="development level" value="Tbio"/>
</dbReference>
<dbReference type="PRO" id="PR:Q6P9F7"/>
<dbReference type="Proteomes" id="UP000005640">
    <property type="component" value="Chromosome 1"/>
</dbReference>
<dbReference type="RNAct" id="Q6P9F7">
    <property type="molecule type" value="protein"/>
</dbReference>
<dbReference type="Bgee" id="ENSG00000197147">
    <property type="expression patterns" value="Expressed in Brodmann (1909) area 23 and 178 other cell types or tissues"/>
</dbReference>
<dbReference type="ExpressionAtlas" id="Q6P9F7">
    <property type="expression patterns" value="baseline and differential"/>
</dbReference>
<dbReference type="GO" id="GO:0005737">
    <property type="term" value="C:cytoplasm"/>
    <property type="evidence" value="ECO:0000314"/>
    <property type="project" value="UniProtKB"/>
</dbReference>
<dbReference type="GO" id="GO:0005789">
    <property type="term" value="C:endoplasmic reticulum membrane"/>
    <property type="evidence" value="ECO:0007669"/>
    <property type="project" value="UniProtKB-SubCell"/>
</dbReference>
<dbReference type="GO" id="GO:0034702">
    <property type="term" value="C:monoatomic ion channel complex"/>
    <property type="evidence" value="ECO:0000315"/>
    <property type="project" value="UniProtKB"/>
</dbReference>
<dbReference type="GO" id="GO:0005886">
    <property type="term" value="C:plasma membrane"/>
    <property type="evidence" value="ECO:0000314"/>
    <property type="project" value="UniProtKB"/>
</dbReference>
<dbReference type="GO" id="GO:0015810">
    <property type="term" value="P:aspartate transmembrane transport"/>
    <property type="evidence" value="ECO:0000318"/>
    <property type="project" value="GO_Central"/>
</dbReference>
<dbReference type="GO" id="GO:0140361">
    <property type="term" value="P:cyclic-GMP-AMP transmembrane import across plasma membrane"/>
    <property type="evidence" value="ECO:0000318"/>
    <property type="project" value="GO_Central"/>
</dbReference>
<dbReference type="GO" id="GO:0035556">
    <property type="term" value="P:intracellular signal transduction"/>
    <property type="evidence" value="ECO:0000318"/>
    <property type="project" value="GO_Central"/>
</dbReference>
<dbReference type="GO" id="GO:0098656">
    <property type="term" value="P:monoatomic anion transmembrane transport"/>
    <property type="evidence" value="ECO:0000315"/>
    <property type="project" value="UniProtKB"/>
</dbReference>
<dbReference type="FunFam" id="3.80.10.10:FF:000955">
    <property type="entry name" value="Volume-regulated anion channel subunit LRRC8B"/>
    <property type="match status" value="1"/>
</dbReference>
<dbReference type="FunFam" id="3.80.10.10:FF:000225">
    <property type="entry name" value="volume-regulated anion channel subunit LRRC8B"/>
    <property type="match status" value="1"/>
</dbReference>
<dbReference type="FunFam" id="3.80.10.10:FF:000263">
    <property type="entry name" value="volume-regulated anion channel subunit LRRC8B"/>
    <property type="match status" value="1"/>
</dbReference>
<dbReference type="Gene3D" id="3.80.10.10">
    <property type="entry name" value="Ribonuclease Inhibitor"/>
    <property type="match status" value="3"/>
</dbReference>
<dbReference type="InterPro" id="IPR001611">
    <property type="entry name" value="Leu-rich_rpt"/>
</dbReference>
<dbReference type="InterPro" id="IPR003591">
    <property type="entry name" value="Leu-rich_rpt_typical-subtyp"/>
</dbReference>
<dbReference type="InterPro" id="IPR026906">
    <property type="entry name" value="LRR_5"/>
</dbReference>
<dbReference type="InterPro" id="IPR032675">
    <property type="entry name" value="LRR_dom_sf"/>
</dbReference>
<dbReference type="InterPro" id="IPR052595">
    <property type="entry name" value="LRRC69/RLP"/>
</dbReference>
<dbReference type="InterPro" id="IPR021040">
    <property type="entry name" value="LRRC8_Pannexin-like"/>
</dbReference>
<dbReference type="PANTHER" id="PTHR48057">
    <property type="entry name" value="LEUCINE-RICH REPEAT SERINE/THREONINE-PROTEIN KINASE 1"/>
    <property type="match status" value="1"/>
</dbReference>
<dbReference type="PANTHER" id="PTHR48057:SF9">
    <property type="entry name" value="LRR RECEPTOR-LIKE KINASE"/>
    <property type="match status" value="1"/>
</dbReference>
<dbReference type="Pfam" id="PF13306">
    <property type="entry name" value="LRR_5"/>
    <property type="match status" value="2"/>
</dbReference>
<dbReference type="Pfam" id="PF13855">
    <property type="entry name" value="LRR_8"/>
    <property type="match status" value="1"/>
</dbReference>
<dbReference type="Pfam" id="PF12534">
    <property type="entry name" value="Pannexin_like"/>
    <property type="match status" value="1"/>
</dbReference>
<dbReference type="SMART" id="SM00369">
    <property type="entry name" value="LRR_TYP"/>
    <property type="match status" value="8"/>
</dbReference>
<dbReference type="SUPFAM" id="SSF52047">
    <property type="entry name" value="RNI-like"/>
    <property type="match status" value="1"/>
</dbReference>
<dbReference type="PROSITE" id="PS51450">
    <property type="entry name" value="LRR"/>
    <property type="match status" value="9"/>
</dbReference>